<gene>
    <name evidence="1" type="primary">ubiE</name>
    <name type="ordered locus">BRA1066</name>
    <name type="ordered locus">BS1330_II1058</name>
</gene>
<evidence type="ECO:0000255" key="1">
    <source>
        <dbReference type="HAMAP-Rule" id="MF_01813"/>
    </source>
</evidence>
<name>UBIE_BRUSU</name>
<protein>
    <recommendedName>
        <fullName evidence="1">Ubiquinone/menaquinone biosynthesis C-methyltransferase UbiE</fullName>
        <ecNumber evidence="1">2.1.1.163</ecNumber>
        <ecNumber evidence="1">2.1.1.201</ecNumber>
    </recommendedName>
    <alternativeName>
        <fullName evidence="1">2-methoxy-6-polyprenyl-1,4-benzoquinol methylase</fullName>
    </alternativeName>
    <alternativeName>
        <fullName evidence="1">Demethylmenaquinone methyltransferase</fullName>
    </alternativeName>
</protein>
<dbReference type="EC" id="2.1.1.163" evidence="1"/>
<dbReference type="EC" id="2.1.1.201" evidence="1"/>
<dbReference type="EMBL" id="AE014292">
    <property type="protein sequence ID" value="AAN34233.1"/>
    <property type="molecule type" value="Genomic_DNA"/>
</dbReference>
<dbReference type="EMBL" id="CP002998">
    <property type="protein sequence ID" value="AEM20510.1"/>
    <property type="molecule type" value="Genomic_DNA"/>
</dbReference>
<dbReference type="RefSeq" id="WP_006192273.1">
    <property type="nucleotide sequence ID" value="NZ_KN046805.1"/>
</dbReference>
<dbReference type="SMR" id="Q8FUZ3"/>
<dbReference type="GeneID" id="45054050"/>
<dbReference type="KEGG" id="bms:BRA1066"/>
<dbReference type="KEGG" id="bsi:BS1330_II1058"/>
<dbReference type="PATRIC" id="fig|204722.21.peg.1053"/>
<dbReference type="HOGENOM" id="CLU_037990_0_0_5"/>
<dbReference type="PhylomeDB" id="Q8FUZ3"/>
<dbReference type="UniPathway" id="UPA00079">
    <property type="reaction ID" value="UER00169"/>
</dbReference>
<dbReference type="UniPathway" id="UPA00232"/>
<dbReference type="Proteomes" id="UP000007104">
    <property type="component" value="Chromosome II"/>
</dbReference>
<dbReference type="GO" id="GO:0008425">
    <property type="term" value="F:2-methoxy-6-polyprenyl-1,4-benzoquinol methyltransferase activity"/>
    <property type="evidence" value="ECO:0007669"/>
    <property type="project" value="UniProtKB-UniRule"/>
</dbReference>
<dbReference type="GO" id="GO:0043770">
    <property type="term" value="F:demethylmenaquinone methyltransferase activity"/>
    <property type="evidence" value="ECO:0007669"/>
    <property type="project" value="UniProtKB-UniRule"/>
</dbReference>
<dbReference type="GO" id="GO:0009060">
    <property type="term" value="P:aerobic respiration"/>
    <property type="evidence" value="ECO:0007669"/>
    <property type="project" value="UniProtKB-UniRule"/>
</dbReference>
<dbReference type="GO" id="GO:0009234">
    <property type="term" value="P:menaquinone biosynthetic process"/>
    <property type="evidence" value="ECO:0007669"/>
    <property type="project" value="UniProtKB-UniRule"/>
</dbReference>
<dbReference type="GO" id="GO:0032259">
    <property type="term" value="P:methylation"/>
    <property type="evidence" value="ECO:0007669"/>
    <property type="project" value="UniProtKB-KW"/>
</dbReference>
<dbReference type="CDD" id="cd02440">
    <property type="entry name" value="AdoMet_MTases"/>
    <property type="match status" value="1"/>
</dbReference>
<dbReference type="FunFam" id="3.40.50.150:FF:000064">
    <property type="entry name" value="2-methoxy-6-polyprenyl-1,4-benzoquinol methylase, mitochondrial"/>
    <property type="match status" value="1"/>
</dbReference>
<dbReference type="Gene3D" id="3.40.50.150">
    <property type="entry name" value="Vaccinia Virus protein VP39"/>
    <property type="match status" value="1"/>
</dbReference>
<dbReference type="HAMAP" id="MF_01813">
    <property type="entry name" value="MenG_UbiE_methyltr"/>
    <property type="match status" value="1"/>
</dbReference>
<dbReference type="InterPro" id="IPR029063">
    <property type="entry name" value="SAM-dependent_MTases_sf"/>
</dbReference>
<dbReference type="InterPro" id="IPR004033">
    <property type="entry name" value="UbiE/COQ5_MeTrFase"/>
</dbReference>
<dbReference type="InterPro" id="IPR023576">
    <property type="entry name" value="UbiE/COQ5_MeTrFase_CS"/>
</dbReference>
<dbReference type="NCBIfam" id="TIGR01934">
    <property type="entry name" value="MenG_MenH_UbiE"/>
    <property type="match status" value="1"/>
</dbReference>
<dbReference type="NCBIfam" id="NF001242">
    <property type="entry name" value="PRK00216.1-3"/>
    <property type="match status" value="1"/>
</dbReference>
<dbReference type="NCBIfam" id="NF001244">
    <property type="entry name" value="PRK00216.1-5"/>
    <property type="match status" value="1"/>
</dbReference>
<dbReference type="PANTHER" id="PTHR43591:SF24">
    <property type="entry name" value="2-METHOXY-6-POLYPRENYL-1,4-BENZOQUINOL METHYLASE, MITOCHONDRIAL"/>
    <property type="match status" value="1"/>
</dbReference>
<dbReference type="PANTHER" id="PTHR43591">
    <property type="entry name" value="METHYLTRANSFERASE"/>
    <property type="match status" value="1"/>
</dbReference>
<dbReference type="Pfam" id="PF01209">
    <property type="entry name" value="Ubie_methyltran"/>
    <property type="match status" value="1"/>
</dbReference>
<dbReference type="SUPFAM" id="SSF53335">
    <property type="entry name" value="S-adenosyl-L-methionine-dependent methyltransferases"/>
    <property type="match status" value="1"/>
</dbReference>
<dbReference type="PROSITE" id="PS51608">
    <property type="entry name" value="SAM_MT_UBIE"/>
    <property type="match status" value="1"/>
</dbReference>
<dbReference type="PROSITE" id="PS01183">
    <property type="entry name" value="UBIE_1"/>
    <property type="match status" value="1"/>
</dbReference>
<dbReference type="PROSITE" id="PS01184">
    <property type="entry name" value="UBIE_2"/>
    <property type="match status" value="1"/>
</dbReference>
<comment type="function">
    <text evidence="1">Methyltransferase required for the conversion of demethylmenaquinol (DMKH2) to menaquinol (MKH2) and the conversion of 2-polyprenyl-6-methoxy-1,4-benzoquinol (DDMQH2) to 2-polyprenyl-3-methyl-6-methoxy-1,4-benzoquinol (DMQH2).</text>
</comment>
<comment type="catalytic activity">
    <reaction evidence="1">
        <text>a 2-demethylmenaquinol + S-adenosyl-L-methionine = a menaquinol + S-adenosyl-L-homocysteine + H(+)</text>
        <dbReference type="Rhea" id="RHEA:42640"/>
        <dbReference type="Rhea" id="RHEA-COMP:9539"/>
        <dbReference type="Rhea" id="RHEA-COMP:9563"/>
        <dbReference type="ChEBI" id="CHEBI:15378"/>
        <dbReference type="ChEBI" id="CHEBI:18151"/>
        <dbReference type="ChEBI" id="CHEBI:55437"/>
        <dbReference type="ChEBI" id="CHEBI:57856"/>
        <dbReference type="ChEBI" id="CHEBI:59789"/>
        <dbReference type="EC" id="2.1.1.163"/>
    </reaction>
</comment>
<comment type="catalytic activity">
    <reaction evidence="1">
        <text>a 2-methoxy-6-(all-trans-polyprenyl)benzene-1,4-diol + S-adenosyl-L-methionine = a 5-methoxy-2-methyl-3-(all-trans-polyprenyl)benzene-1,4-diol + S-adenosyl-L-homocysteine + H(+)</text>
        <dbReference type="Rhea" id="RHEA:28286"/>
        <dbReference type="Rhea" id="RHEA-COMP:10858"/>
        <dbReference type="Rhea" id="RHEA-COMP:10859"/>
        <dbReference type="ChEBI" id="CHEBI:15378"/>
        <dbReference type="ChEBI" id="CHEBI:57856"/>
        <dbReference type="ChEBI" id="CHEBI:59789"/>
        <dbReference type="ChEBI" id="CHEBI:84166"/>
        <dbReference type="ChEBI" id="CHEBI:84167"/>
        <dbReference type="EC" id="2.1.1.201"/>
    </reaction>
</comment>
<comment type="pathway">
    <text evidence="1">Quinol/quinone metabolism; menaquinone biosynthesis; menaquinol from 1,4-dihydroxy-2-naphthoate: step 2/2.</text>
</comment>
<comment type="pathway">
    <text evidence="1">Cofactor biosynthesis; ubiquinone biosynthesis.</text>
</comment>
<comment type="similarity">
    <text evidence="1">Belongs to the class I-like SAM-binding methyltransferase superfamily. MenG/UbiE family.</text>
</comment>
<sequence>MSQQNGNVNRVGAQDRVGASGGMEHSFGFKAVDENEKQGLVNDVFHKVAKRYDIMNDLMSAGMHRVWKDAMVAWLTPSKRPGWTSLDVAGGTGDIAFRIVEVSGRQAHVTILDINGSMLGVGRERAIKKGLIDNLEFVEANAEELPFEDNSFDAYTIAFGIRNVPHIDKALSEAYRVLKPGGRFLCLEFSEVELPVLDKVYDEWSFRAIPRIGKMITGDADSYSYLVESIRKFPKQQDFAAMIEKAGFERVSYRNFTGGIAALHSGWKL</sequence>
<organism>
    <name type="scientific">Brucella suis biovar 1 (strain 1330)</name>
    <dbReference type="NCBI Taxonomy" id="204722"/>
    <lineage>
        <taxon>Bacteria</taxon>
        <taxon>Pseudomonadati</taxon>
        <taxon>Pseudomonadota</taxon>
        <taxon>Alphaproteobacteria</taxon>
        <taxon>Hyphomicrobiales</taxon>
        <taxon>Brucellaceae</taxon>
        <taxon>Brucella/Ochrobactrum group</taxon>
        <taxon>Brucella</taxon>
    </lineage>
</organism>
<feature type="chain" id="PRO_0000193257" description="Ubiquinone/menaquinone biosynthesis C-methyltransferase UbiE">
    <location>
        <begin position="1"/>
        <end position="269"/>
    </location>
</feature>
<feature type="binding site" evidence="1">
    <location>
        <position position="92"/>
    </location>
    <ligand>
        <name>S-adenosyl-L-methionine</name>
        <dbReference type="ChEBI" id="CHEBI:59789"/>
    </ligand>
</feature>
<feature type="binding site" evidence="1">
    <location>
        <position position="113"/>
    </location>
    <ligand>
        <name>S-adenosyl-L-methionine</name>
        <dbReference type="ChEBI" id="CHEBI:59789"/>
    </ligand>
</feature>
<feature type="binding site" evidence="1">
    <location>
        <begin position="141"/>
        <end position="142"/>
    </location>
    <ligand>
        <name>S-adenosyl-L-methionine</name>
        <dbReference type="ChEBI" id="CHEBI:59789"/>
    </ligand>
</feature>
<reference key="1">
    <citation type="journal article" date="2002" name="Proc. Natl. Acad. Sci. U.S.A.">
        <title>The Brucella suis genome reveals fundamental similarities between animal and plant pathogens and symbionts.</title>
        <authorList>
            <person name="Paulsen I.T."/>
            <person name="Seshadri R."/>
            <person name="Nelson K.E."/>
            <person name="Eisen J.A."/>
            <person name="Heidelberg J.F."/>
            <person name="Read T.D."/>
            <person name="Dodson R.J."/>
            <person name="Umayam L.A."/>
            <person name="Brinkac L.M."/>
            <person name="Beanan M.J."/>
            <person name="Daugherty S.C."/>
            <person name="DeBoy R.T."/>
            <person name="Durkin A.S."/>
            <person name="Kolonay J.F."/>
            <person name="Madupu R."/>
            <person name="Nelson W.C."/>
            <person name="Ayodeji B."/>
            <person name="Kraul M."/>
            <person name="Shetty J."/>
            <person name="Malek J.A."/>
            <person name="Van Aken S.E."/>
            <person name="Riedmuller S."/>
            <person name="Tettelin H."/>
            <person name="Gill S.R."/>
            <person name="White O."/>
            <person name="Salzberg S.L."/>
            <person name="Hoover D.L."/>
            <person name="Lindler L.E."/>
            <person name="Halling S.M."/>
            <person name="Boyle S.M."/>
            <person name="Fraser C.M."/>
        </authorList>
    </citation>
    <scope>NUCLEOTIDE SEQUENCE [LARGE SCALE GENOMIC DNA]</scope>
    <source>
        <strain>1330</strain>
    </source>
</reference>
<reference key="2">
    <citation type="journal article" date="2011" name="J. Bacteriol.">
        <title>Revised genome sequence of Brucella suis 1330.</title>
        <authorList>
            <person name="Tae H."/>
            <person name="Shallom S."/>
            <person name="Settlage R."/>
            <person name="Preston D."/>
            <person name="Adams L.G."/>
            <person name="Garner H.R."/>
        </authorList>
    </citation>
    <scope>NUCLEOTIDE SEQUENCE [LARGE SCALE GENOMIC DNA]</scope>
    <source>
        <strain>1330</strain>
    </source>
</reference>
<proteinExistence type="inferred from homology"/>
<accession>Q8FUZ3</accession>
<accession>G0KE72</accession>
<keyword id="KW-0474">Menaquinone biosynthesis</keyword>
<keyword id="KW-0489">Methyltransferase</keyword>
<keyword id="KW-0949">S-adenosyl-L-methionine</keyword>
<keyword id="KW-0808">Transferase</keyword>
<keyword id="KW-0831">Ubiquinone biosynthesis</keyword>